<keyword id="KW-0963">Cytoplasm</keyword>
<keyword id="KW-0378">Hydrolase</keyword>
<keyword id="KW-1185">Reference proteome</keyword>
<accession>O74648</accession>
<sequence length="246" mass="27991">MSDSQDKNYISFEKTEIGQIVSEAPAEKYVSFQKKYFNRLTIIGDSITQKGFTPGGYCAELMNFYQRRLRVDVWGFSGYTSRHVLRYLPEIPLEIDSTKLLIVFLGTNDCQLTETGYMCPVDEFKNNLLALTRPFPHSKIIIVSPGICTKDICFKREQEPYVIAASETVNTLNKSKANSAGLINLYEITKSYPTPELLFTDGLHFSSLGYSLLFNEIVATISKAWPELLPNNLPLQFPHWSEILFT</sequence>
<reference key="1">
    <citation type="submission" date="1998-09" db="EMBL/GenBank/DDBJ databases">
        <title>S.pombe IAH1 homolog.</title>
        <authorList>
            <person name="Kawamukai M."/>
        </authorList>
    </citation>
    <scope>NUCLEOTIDE SEQUENCE [MRNA]</scope>
</reference>
<reference key="2">
    <citation type="journal article" date="2002" name="Nature">
        <title>The genome sequence of Schizosaccharomyces pombe.</title>
        <authorList>
            <person name="Wood V."/>
            <person name="Gwilliam R."/>
            <person name="Rajandream M.A."/>
            <person name="Lyne M.H."/>
            <person name="Lyne R."/>
            <person name="Stewart A."/>
            <person name="Sgouros J.G."/>
            <person name="Peat N."/>
            <person name="Hayles J."/>
            <person name="Baker S.G."/>
            <person name="Basham D."/>
            <person name="Bowman S."/>
            <person name="Brooks K."/>
            <person name="Brown D."/>
            <person name="Brown S."/>
            <person name="Chillingworth T."/>
            <person name="Churcher C.M."/>
            <person name="Collins M."/>
            <person name="Connor R."/>
            <person name="Cronin A."/>
            <person name="Davis P."/>
            <person name="Feltwell T."/>
            <person name="Fraser A."/>
            <person name="Gentles S."/>
            <person name="Goble A."/>
            <person name="Hamlin N."/>
            <person name="Harris D.E."/>
            <person name="Hidalgo J."/>
            <person name="Hodgson G."/>
            <person name="Holroyd S."/>
            <person name="Hornsby T."/>
            <person name="Howarth S."/>
            <person name="Huckle E.J."/>
            <person name="Hunt S."/>
            <person name="Jagels K."/>
            <person name="James K.D."/>
            <person name="Jones L."/>
            <person name="Jones M."/>
            <person name="Leather S."/>
            <person name="McDonald S."/>
            <person name="McLean J."/>
            <person name="Mooney P."/>
            <person name="Moule S."/>
            <person name="Mungall K.L."/>
            <person name="Murphy L.D."/>
            <person name="Niblett D."/>
            <person name="Odell C."/>
            <person name="Oliver K."/>
            <person name="O'Neil S."/>
            <person name="Pearson D."/>
            <person name="Quail M.A."/>
            <person name="Rabbinowitsch E."/>
            <person name="Rutherford K.M."/>
            <person name="Rutter S."/>
            <person name="Saunders D."/>
            <person name="Seeger K."/>
            <person name="Sharp S."/>
            <person name="Skelton J."/>
            <person name="Simmonds M.N."/>
            <person name="Squares R."/>
            <person name="Squares S."/>
            <person name="Stevens K."/>
            <person name="Taylor K."/>
            <person name="Taylor R.G."/>
            <person name="Tivey A."/>
            <person name="Walsh S.V."/>
            <person name="Warren T."/>
            <person name="Whitehead S."/>
            <person name="Woodward J.R."/>
            <person name="Volckaert G."/>
            <person name="Aert R."/>
            <person name="Robben J."/>
            <person name="Grymonprez B."/>
            <person name="Weltjens I."/>
            <person name="Vanstreels E."/>
            <person name="Rieger M."/>
            <person name="Schaefer M."/>
            <person name="Mueller-Auer S."/>
            <person name="Gabel C."/>
            <person name="Fuchs M."/>
            <person name="Duesterhoeft A."/>
            <person name="Fritzc C."/>
            <person name="Holzer E."/>
            <person name="Moestl D."/>
            <person name="Hilbert H."/>
            <person name="Borzym K."/>
            <person name="Langer I."/>
            <person name="Beck A."/>
            <person name="Lehrach H."/>
            <person name="Reinhardt R."/>
            <person name="Pohl T.M."/>
            <person name="Eger P."/>
            <person name="Zimmermann W."/>
            <person name="Wedler H."/>
            <person name="Wambutt R."/>
            <person name="Purnelle B."/>
            <person name="Goffeau A."/>
            <person name="Cadieu E."/>
            <person name="Dreano S."/>
            <person name="Gloux S."/>
            <person name="Lelaure V."/>
            <person name="Mottier S."/>
            <person name="Galibert F."/>
            <person name="Aves S.J."/>
            <person name="Xiang Z."/>
            <person name="Hunt C."/>
            <person name="Moore K."/>
            <person name="Hurst S.M."/>
            <person name="Lucas M."/>
            <person name="Rochet M."/>
            <person name="Gaillardin C."/>
            <person name="Tallada V.A."/>
            <person name="Garzon A."/>
            <person name="Thode G."/>
            <person name="Daga R.R."/>
            <person name="Cruzado L."/>
            <person name="Jimenez J."/>
            <person name="Sanchez M."/>
            <person name="del Rey F."/>
            <person name="Benito J."/>
            <person name="Dominguez A."/>
            <person name="Revuelta J.L."/>
            <person name="Moreno S."/>
            <person name="Armstrong J."/>
            <person name="Forsburg S.L."/>
            <person name="Cerutti L."/>
            <person name="Lowe T."/>
            <person name="McCombie W.R."/>
            <person name="Paulsen I."/>
            <person name="Potashkin J."/>
            <person name="Shpakovski G.V."/>
            <person name="Ussery D."/>
            <person name="Barrell B.G."/>
            <person name="Nurse P."/>
        </authorList>
    </citation>
    <scope>NUCLEOTIDE SEQUENCE [LARGE SCALE GENOMIC DNA]</scope>
    <source>
        <strain>972 / ATCC 24843</strain>
    </source>
</reference>
<reference key="3">
    <citation type="journal article" date="2006" name="Nat. Biotechnol.">
        <title>ORFeome cloning and global analysis of protein localization in the fission yeast Schizosaccharomyces pombe.</title>
        <authorList>
            <person name="Matsuyama A."/>
            <person name="Arai R."/>
            <person name="Yashiroda Y."/>
            <person name="Shirai A."/>
            <person name="Kamata A."/>
            <person name="Sekido S."/>
            <person name="Kobayashi Y."/>
            <person name="Hashimoto A."/>
            <person name="Hamamoto M."/>
            <person name="Hiraoka Y."/>
            <person name="Horinouchi S."/>
            <person name="Yoshida M."/>
        </authorList>
    </citation>
    <scope>SUBCELLULAR LOCATION [LARGE SCALE ANALYSIS]</scope>
</reference>
<gene>
    <name type="primary">iah1</name>
    <name type="ORF">SPCC126.10</name>
</gene>
<evidence type="ECO:0000250" key="1">
    <source>
        <dbReference type="UniProtKB" id="P41734"/>
    </source>
</evidence>
<evidence type="ECO:0000269" key="2">
    <source>
    </source>
</evidence>
<evidence type="ECO:0000305" key="3"/>
<dbReference type="EC" id="3.1.1.112" evidence="1"/>
<dbReference type="EMBL" id="AB017605">
    <property type="protein sequence ID" value="BAA33369.1"/>
    <property type="molecule type" value="mRNA"/>
</dbReference>
<dbReference type="EMBL" id="CU329672">
    <property type="protein sequence ID" value="CAA22479.1"/>
    <property type="molecule type" value="Genomic_DNA"/>
</dbReference>
<dbReference type="PIR" id="T43421">
    <property type="entry name" value="T43421"/>
</dbReference>
<dbReference type="RefSeq" id="NP_588453.1">
    <property type="nucleotide sequence ID" value="NM_001023444.2"/>
</dbReference>
<dbReference type="SMR" id="O74648"/>
<dbReference type="BioGRID" id="275634">
    <property type="interactions" value="4"/>
</dbReference>
<dbReference type="FunCoup" id="O74648">
    <property type="interactions" value="106"/>
</dbReference>
<dbReference type="STRING" id="284812.O74648"/>
<dbReference type="iPTMnet" id="O74648"/>
<dbReference type="PaxDb" id="4896-SPCC126.10.1"/>
<dbReference type="EnsemblFungi" id="SPCC126.10.1">
    <property type="protein sequence ID" value="SPCC126.10.1:pep"/>
    <property type="gene ID" value="SPCC126.10"/>
</dbReference>
<dbReference type="GeneID" id="2539062"/>
<dbReference type="KEGG" id="spo:2539062"/>
<dbReference type="PomBase" id="SPCC126.10">
    <property type="gene designation" value="iah1"/>
</dbReference>
<dbReference type="VEuPathDB" id="FungiDB:SPCC126.10"/>
<dbReference type="eggNOG" id="KOG3035">
    <property type="taxonomic scope" value="Eukaryota"/>
</dbReference>
<dbReference type="HOGENOM" id="CLU_051989_0_0_1"/>
<dbReference type="InParanoid" id="O74648"/>
<dbReference type="OMA" id="VPIDRYK"/>
<dbReference type="PhylomeDB" id="O74648"/>
<dbReference type="PRO" id="PR:O74648"/>
<dbReference type="Proteomes" id="UP000002485">
    <property type="component" value="Chromosome III"/>
</dbReference>
<dbReference type="GO" id="GO:0005737">
    <property type="term" value="C:cytoplasm"/>
    <property type="evidence" value="ECO:0007005"/>
    <property type="project" value="PomBase"/>
</dbReference>
<dbReference type="GO" id="GO:0016788">
    <property type="term" value="F:hydrolase activity, acting on ester bonds"/>
    <property type="evidence" value="ECO:0000266"/>
    <property type="project" value="PomBase"/>
</dbReference>
<dbReference type="GO" id="GO:0006083">
    <property type="term" value="P:acetate metabolic process"/>
    <property type="evidence" value="ECO:0000266"/>
    <property type="project" value="PomBase"/>
</dbReference>
<dbReference type="GO" id="GO:0006084">
    <property type="term" value="P:acetyl-CoA metabolic process"/>
    <property type="evidence" value="ECO:0000303"/>
    <property type="project" value="PomBase"/>
</dbReference>
<dbReference type="CDD" id="cd01838">
    <property type="entry name" value="Isoamyl_acetate_hydrolase_like"/>
    <property type="match status" value="1"/>
</dbReference>
<dbReference type="FunFam" id="3.40.50.1110:FF:000043">
    <property type="entry name" value="Esterase, putative"/>
    <property type="match status" value="1"/>
</dbReference>
<dbReference type="Gene3D" id="3.40.50.1110">
    <property type="entry name" value="SGNH hydrolase"/>
    <property type="match status" value="1"/>
</dbReference>
<dbReference type="InterPro" id="IPR001087">
    <property type="entry name" value="GDSL"/>
</dbReference>
<dbReference type="InterPro" id="IPR045136">
    <property type="entry name" value="Iah1-like"/>
</dbReference>
<dbReference type="InterPro" id="IPR036514">
    <property type="entry name" value="SGNH_hydro_sf"/>
</dbReference>
<dbReference type="PANTHER" id="PTHR14209">
    <property type="entry name" value="ISOAMYL ACETATE-HYDROLYZING ESTERASE 1"/>
    <property type="match status" value="1"/>
</dbReference>
<dbReference type="PANTHER" id="PTHR14209:SF19">
    <property type="entry name" value="ISOAMYL ACETATE-HYDROLYZING ESTERASE 1 HOMOLOG"/>
    <property type="match status" value="1"/>
</dbReference>
<dbReference type="Pfam" id="PF00657">
    <property type="entry name" value="Lipase_GDSL"/>
    <property type="match status" value="1"/>
</dbReference>
<dbReference type="SUPFAM" id="SSF52266">
    <property type="entry name" value="SGNH hydrolase"/>
    <property type="match status" value="1"/>
</dbReference>
<protein>
    <recommendedName>
        <fullName>Isoamyl acetate-hydrolyzing esterase</fullName>
        <ecNumber evidence="1">3.1.1.112</ecNumber>
    </recommendedName>
</protein>
<feature type="chain" id="PRO_0000314106" description="Isoamyl acetate-hydrolyzing esterase">
    <location>
        <begin position="1"/>
        <end position="246"/>
    </location>
</feature>
<feature type="active site" description="Nucleophile" evidence="1">
    <location>
        <position position="46"/>
    </location>
</feature>
<feature type="active site" description="Proton donor" evidence="1">
    <location>
        <position position="201"/>
    </location>
</feature>
<feature type="active site" description="Proton acceptor" evidence="1">
    <location>
        <position position="204"/>
    </location>
</feature>
<feature type="site" description="Transition state stabilizer" evidence="1">
    <location>
        <position position="78"/>
    </location>
</feature>
<feature type="site" description="Transition state stabilizer" evidence="1">
    <location>
        <position position="108"/>
    </location>
</feature>
<name>IAH1_SCHPO</name>
<proteinExistence type="evidence at transcript level"/>
<comment type="catalytic activity">
    <reaction evidence="1">
        <text>3-methylbutyl acetate + H2O = 3-methylbutanol + acetate + H(+)</text>
        <dbReference type="Rhea" id="RHEA:60436"/>
        <dbReference type="ChEBI" id="CHEBI:15377"/>
        <dbReference type="ChEBI" id="CHEBI:15378"/>
        <dbReference type="ChEBI" id="CHEBI:15837"/>
        <dbReference type="ChEBI" id="CHEBI:30089"/>
        <dbReference type="ChEBI" id="CHEBI:31725"/>
        <dbReference type="EC" id="3.1.1.112"/>
    </reaction>
</comment>
<comment type="subcellular location">
    <subcellularLocation>
        <location evidence="2">Cytoplasm</location>
    </subcellularLocation>
</comment>
<comment type="similarity">
    <text evidence="3">Belongs to the 'GDSL' lipolytic enzyme family. IAH1 subfamily.</text>
</comment>
<organism>
    <name type="scientific">Schizosaccharomyces pombe (strain 972 / ATCC 24843)</name>
    <name type="common">Fission yeast</name>
    <dbReference type="NCBI Taxonomy" id="284812"/>
    <lineage>
        <taxon>Eukaryota</taxon>
        <taxon>Fungi</taxon>
        <taxon>Dikarya</taxon>
        <taxon>Ascomycota</taxon>
        <taxon>Taphrinomycotina</taxon>
        <taxon>Schizosaccharomycetes</taxon>
        <taxon>Schizosaccharomycetales</taxon>
        <taxon>Schizosaccharomycetaceae</taxon>
        <taxon>Schizosaccharomyces</taxon>
    </lineage>
</organism>